<name>ECAP_SOLLC</name>
<organism>
    <name type="scientific">Solanum lycopersicum</name>
    <name type="common">Tomato</name>
    <name type="synonym">Lycopersicon esculentum</name>
    <dbReference type="NCBI Taxonomy" id="4081"/>
    <lineage>
        <taxon>Eukaryota</taxon>
        <taxon>Viridiplantae</taxon>
        <taxon>Streptophyta</taxon>
        <taxon>Embryophyta</taxon>
        <taxon>Tracheophyta</taxon>
        <taxon>Spermatophyta</taxon>
        <taxon>Magnoliopsida</taxon>
        <taxon>eudicotyledons</taxon>
        <taxon>Gunneridae</taxon>
        <taxon>Pentapetalae</taxon>
        <taxon>asterids</taxon>
        <taxon>lamiids</taxon>
        <taxon>Solanales</taxon>
        <taxon>Solanaceae</taxon>
        <taxon>Solanoideae</taxon>
        <taxon>Solaneae</taxon>
        <taxon>Solanum</taxon>
        <taxon>Solanum subgen. Lycopersicon</taxon>
    </lineage>
</organism>
<accession>Q42883</accession>
<reference evidence="7 8" key="1">
    <citation type="journal article" date="1992" name="Proc. Natl. Acad. Sci. U.S.A.">
        <title>Higher plant Ca2+-ATPase: primary structure and regulation of mRNA abundance by salt.</title>
        <authorList>
            <person name="Wimmers L.E."/>
            <person name="Ewing N.N."/>
            <person name="Bennett A.B."/>
        </authorList>
    </citation>
    <scope>NUCLEOTIDE SEQUENCE [GENOMIC DNA]</scope>
    <scope>TISSUE SPECIFICITY</scope>
    <scope>INDUCTION</scope>
</reference>
<reference evidence="9" key="2">
    <citation type="journal article" date="1999" name="Plant Mol. Biol.">
        <title>Alternative transcription initiation sites generate two LCA1 Ca2+-ATPase mRNA transcripts in tomato roots.</title>
        <authorList>
            <person name="Navarro-Avino J.P."/>
            <person name="Hentzen A.E."/>
            <person name="Bennett A.B."/>
        </authorList>
    </citation>
    <scope>NUCLEOTIDE SEQUENCE [MRNA]</scope>
    <source>
        <strain evidence="4">cv. Ohio state 4</strain>
        <tissue evidence="4">Root</tissue>
    </source>
</reference>
<gene>
    <name evidence="8" type="primary">LCA1</name>
</gene>
<comment type="function">
    <text evidence="6">This magnesium-dependent enzyme catalyzes the hydrolysis of ATP coupled with the translocation of calcium from the cytosol to an endomembrane compartment.</text>
</comment>
<comment type="catalytic activity">
    <reaction>
        <text>Ca(2+)(in) + ATP + H2O = Ca(2+)(out) + ADP + phosphate + H(+)</text>
        <dbReference type="Rhea" id="RHEA:18105"/>
        <dbReference type="ChEBI" id="CHEBI:15377"/>
        <dbReference type="ChEBI" id="CHEBI:15378"/>
        <dbReference type="ChEBI" id="CHEBI:29108"/>
        <dbReference type="ChEBI" id="CHEBI:30616"/>
        <dbReference type="ChEBI" id="CHEBI:43474"/>
        <dbReference type="ChEBI" id="CHEBI:456216"/>
        <dbReference type="EC" id="7.2.2.10"/>
    </reaction>
</comment>
<comment type="subcellular location">
    <subcellularLocation>
        <location evidence="1">Endoplasmic reticulum membrane</location>
        <topology evidence="1">Multi-pass membrane protein</topology>
    </subcellularLocation>
</comment>
<comment type="tissue specificity">
    <text evidence="5">9-fold higher level in roots compared with leaves.</text>
</comment>
<comment type="induction">
    <text evidence="5">3-fold in leaves and 2-fold in roots 1 day after exposure to high sodium chloride.</text>
</comment>
<comment type="similarity">
    <text evidence="7">Belongs to the cation transport ATPase (P-type) (TC 3.A.3) family. Type IIA subfamily.</text>
</comment>
<evidence type="ECO:0000250" key="1"/>
<evidence type="ECO:0000250" key="2">
    <source>
        <dbReference type="UniProtKB" id="P04191"/>
    </source>
</evidence>
<evidence type="ECO:0000255" key="3"/>
<evidence type="ECO:0000269" key="4">
    <source>
    </source>
</evidence>
<evidence type="ECO:0000269" key="5">
    <source>
    </source>
</evidence>
<evidence type="ECO:0000303" key="6">
    <source>
    </source>
</evidence>
<evidence type="ECO:0000305" key="7"/>
<evidence type="ECO:0000312" key="8">
    <source>
        <dbReference type="EMBL" id="AAA34138.1"/>
    </source>
</evidence>
<evidence type="ECO:0000312" key="9">
    <source>
        <dbReference type="EMBL" id="AAD11617.1"/>
    </source>
</evidence>
<proteinExistence type="evidence at transcript level"/>
<sequence length="1048" mass="116128">MEEKPFPAWSWSVDQCLKEYQVKLEKGLSTYEVDKRRERYGLNELEKEKGKPLWRLVLEQFDDTLVKILLGAAFISFVLAYVNQDETGESGFEAYVEPLVILWILVLNAIVGVWQESNAEKALEALKEMQGESAKVLRDGYLVPDFPAKELVPGDIVELRVGDKVPADMRVATLKSSTLRVEQSSLTGESMPVTKSTDFLATDDCELQAKENMVFAGTTVVNGSCICIVVNTGMCTEIGKIQRQIHDASMEESDTPLKKKLDEFGNRLTFAIGVVCLVVWAINYKYFLSWEVVDDWPSDFRFSFEKCAYYFKIAVALAVAAIPEGLPSVITTCLALGTRKMAQKNAIVRKLQSVETLGCTTVICSDKTGTLTTNQMSVSEFFTLGRKTTACRVFGVEGTTYDPKDGGIMNWNCCKMDANLLLMAEICAICNDAGVFCDGRLFKATGLPTEAALKVLVEKMGVPDSKARCKIRDAQIVSSYLIDRNTVKLGCCDWWMKRSKRVATLEFDRVRKSMGVIVREPNGSNRLLVKGAFESLLERSTYVQLADGSTVPLDESCRQLLLLKQLEMSSKGLRCLGLAYKDDLGELSGYYAATHPAHKKLLDPSCYSSIESDLVFVGVVGLRDPPREEVHRAVNDCRRAGIKIMVITGDNKSTAEAVCREIQLFSNGENLRGSSFTGKEFMAFSSQQQIEILSQDGGKVFSRAEPRHKQEIVRMLKEMGEIVAMTGDGVNDAPALKLADIGIAMGITGTEVAKEASDMVLADDNFSTIVSAVAEGRSIYNNMKAFIRYMISSNVGEVISIFLTAVLGIPECLIPVQLLWVNLVTDGPPATALGFNPADVDIMQKPPRKNTDALINSWVFFRYMVIGSYVGIATVGIFIVWYTQASFLGINIVSDGHTLVELSQLRNWGECSTWTNFTVSPFKAGNRLITFSDPCEYFTVGKVKAMTLSLSVLVAIEMFNSLNALSEDNSLIKMPPWRNPWLLVAMSLSFALHSVILYVPFLADIFGIVPLSLYEWLLVILLSAPVILIDEVLKFVGRRRRRTKLKAA</sequence>
<protein>
    <recommendedName>
        <fullName>Calcium-transporting ATPase, endoplasmic reticulum-type</fullName>
        <ecNumber>7.2.2.10</ecNumber>
    </recommendedName>
</protein>
<dbReference type="EC" id="7.2.2.10"/>
<dbReference type="EMBL" id="M96324">
    <property type="protein sequence ID" value="AAA34138.1"/>
    <property type="molecule type" value="Genomic_DNA"/>
</dbReference>
<dbReference type="EMBL" id="AF050495">
    <property type="protein sequence ID" value="AAD11617.1"/>
    <property type="molecule type" value="mRNA"/>
</dbReference>
<dbReference type="EMBL" id="AF050496">
    <property type="protein sequence ID" value="AAD11618.1"/>
    <property type="molecule type" value="mRNA"/>
</dbReference>
<dbReference type="PIR" id="A46284">
    <property type="entry name" value="S27763"/>
</dbReference>
<dbReference type="RefSeq" id="NP_001234073.1">
    <property type="nucleotide sequence ID" value="NM_001247144.2"/>
</dbReference>
<dbReference type="RefSeq" id="XP_010323817.1">
    <property type="nucleotide sequence ID" value="XM_010325515.4"/>
</dbReference>
<dbReference type="RefSeq" id="XP_010323824.1">
    <property type="nucleotide sequence ID" value="XM_010325522.4"/>
</dbReference>
<dbReference type="RefSeq" id="XP_010323830.1">
    <property type="nucleotide sequence ID" value="XM_010325528.4"/>
</dbReference>
<dbReference type="RefSeq" id="XP_025888877.1">
    <property type="nucleotide sequence ID" value="XM_026033092.2"/>
</dbReference>
<dbReference type="RefSeq" id="XP_069143841.1">
    <property type="nucleotide sequence ID" value="XM_069287740.1"/>
</dbReference>
<dbReference type="SMR" id="Q42883"/>
<dbReference type="FunCoup" id="Q42883">
    <property type="interactions" value="432"/>
</dbReference>
<dbReference type="STRING" id="4081.Q42883"/>
<dbReference type="PaxDb" id="4081-Solyc01g096190.2.1"/>
<dbReference type="EnsemblPlants" id="Solyc01g096190.3.1">
    <property type="protein sequence ID" value="Solyc01g096190.3.1"/>
    <property type="gene ID" value="Solyc01g096190.3"/>
</dbReference>
<dbReference type="GeneID" id="543554"/>
<dbReference type="Gramene" id="Solyc01g096190.3.1">
    <property type="protein sequence ID" value="Solyc01g096190.3.1"/>
    <property type="gene ID" value="Solyc01g096190.3"/>
</dbReference>
<dbReference type="KEGG" id="sly:543554"/>
<dbReference type="eggNOG" id="KOG0202">
    <property type="taxonomic scope" value="Eukaryota"/>
</dbReference>
<dbReference type="HOGENOM" id="CLU_002360_4_1_1"/>
<dbReference type="InParanoid" id="Q42883"/>
<dbReference type="OMA" id="PVCSIVF"/>
<dbReference type="OrthoDB" id="3352408at2759"/>
<dbReference type="PhylomeDB" id="Q42883"/>
<dbReference type="BioCyc" id="MetaCyc:MONOMER-14597"/>
<dbReference type="BRENDA" id="7.2.2.10">
    <property type="organism ID" value="3101"/>
</dbReference>
<dbReference type="Proteomes" id="UP000004994">
    <property type="component" value="Chromosome 1"/>
</dbReference>
<dbReference type="GO" id="GO:0005789">
    <property type="term" value="C:endoplasmic reticulum membrane"/>
    <property type="evidence" value="ECO:0000250"/>
    <property type="project" value="UniProtKB"/>
</dbReference>
<dbReference type="GO" id="GO:0016020">
    <property type="term" value="C:membrane"/>
    <property type="evidence" value="ECO:0000318"/>
    <property type="project" value="GO_Central"/>
</dbReference>
<dbReference type="GO" id="GO:0005524">
    <property type="term" value="F:ATP binding"/>
    <property type="evidence" value="ECO:0007669"/>
    <property type="project" value="UniProtKB-KW"/>
</dbReference>
<dbReference type="GO" id="GO:0016887">
    <property type="term" value="F:ATP hydrolysis activity"/>
    <property type="evidence" value="ECO:0007669"/>
    <property type="project" value="InterPro"/>
</dbReference>
<dbReference type="GO" id="GO:0046872">
    <property type="term" value="F:metal ion binding"/>
    <property type="evidence" value="ECO:0007669"/>
    <property type="project" value="UniProtKB-KW"/>
</dbReference>
<dbReference type="GO" id="GO:0005388">
    <property type="term" value="F:P-type calcium transporter activity"/>
    <property type="evidence" value="ECO:0000250"/>
    <property type="project" value="UniProtKB"/>
</dbReference>
<dbReference type="GO" id="GO:0070588">
    <property type="term" value="P:calcium ion transmembrane transport"/>
    <property type="evidence" value="ECO:0000318"/>
    <property type="project" value="GO_Central"/>
</dbReference>
<dbReference type="GO" id="GO:0006816">
    <property type="term" value="P:calcium ion transport"/>
    <property type="evidence" value="ECO:0000250"/>
    <property type="project" value="UniProtKB"/>
</dbReference>
<dbReference type="GO" id="GO:0006874">
    <property type="term" value="P:intracellular calcium ion homeostasis"/>
    <property type="evidence" value="ECO:0000318"/>
    <property type="project" value="GO_Central"/>
</dbReference>
<dbReference type="FunFam" id="3.40.1110.10:FF:000021">
    <property type="entry name" value="calcium-transporting ATPase, endoplasmic reticulum-type"/>
    <property type="match status" value="1"/>
</dbReference>
<dbReference type="FunFam" id="2.70.150.10:FF:000014">
    <property type="entry name" value="Calcium-transporting ATPase, putative"/>
    <property type="match status" value="1"/>
</dbReference>
<dbReference type="FunFam" id="3.40.50.1000:FF:000028">
    <property type="entry name" value="Calcium-transporting P-type ATPase, putative"/>
    <property type="match status" value="1"/>
</dbReference>
<dbReference type="FunFam" id="1.20.1110.10:FF:000077">
    <property type="entry name" value="ECA1 (ER-TYPE CA2+-ATPASE 1)"/>
    <property type="match status" value="1"/>
</dbReference>
<dbReference type="FunFam" id="1.20.1110.10:FF:000065">
    <property type="entry name" value="Sarcoplasmic/endoplasmic reticulum calcium ATPase 1"/>
    <property type="match status" value="1"/>
</dbReference>
<dbReference type="Gene3D" id="3.40.1110.10">
    <property type="entry name" value="Calcium-transporting ATPase, cytoplasmic domain N"/>
    <property type="match status" value="1"/>
</dbReference>
<dbReference type="Gene3D" id="2.70.150.10">
    <property type="entry name" value="Calcium-transporting ATPase, cytoplasmic transduction domain A"/>
    <property type="match status" value="1"/>
</dbReference>
<dbReference type="Gene3D" id="1.20.1110.10">
    <property type="entry name" value="Calcium-transporting ATPase, transmembrane domain"/>
    <property type="match status" value="1"/>
</dbReference>
<dbReference type="Gene3D" id="3.40.50.1000">
    <property type="entry name" value="HAD superfamily/HAD-like"/>
    <property type="match status" value="1"/>
</dbReference>
<dbReference type="InterPro" id="IPR006068">
    <property type="entry name" value="ATPase_P-typ_cation-transptr_C"/>
</dbReference>
<dbReference type="InterPro" id="IPR004014">
    <property type="entry name" value="ATPase_P-typ_cation-transptr_N"/>
</dbReference>
<dbReference type="InterPro" id="IPR023299">
    <property type="entry name" value="ATPase_P-typ_cyto_dom_N"/>
</dbReference>
<dbReference type="InterPro" id="IPR018303">
    <property type="entry name" value="ATPase_P-typ_P_site"/>
</dbReference>
<dbReference type="InterPro" id="IPR023298">
    <property type="entry name" value="ATPase_P-typ_TM_dom_sf"/>
</dbReference>
<dbReference type="InterPro" id="IPR008250">
    <property type="entry name" value="ATPase_P-typ_transduc_dom_A_sf"/>
</dbReference>
<dbReference type="InterPro" id="IPR036412">
    <property type="entry name" value="HAD-like_sf"/>
</dbReference>
<dbReference type="InterPro" id="IPR023214">
    <property type="entry name" value="HAD_sf"/>
</dbReference>
<dbReference type="InterPro" id="IPR001757">
    <property type="entry name" value="P_typ_ATPase"/>
</dbReference>
<dbReference type="InterPro" id="IPR044492">
    <property type="entry name" value="P_typ_ATPase_HD_dom"/>
</dbReference>
<dbReference type="NCBIfam" id="TIGR01494">
    <property type="entry name" value="ATPase_P-type"/>
    <property type="match status" value="3"/>
</dbReference>
<dbReference type="PANTHER" id="PTHR42861">
    <property type="entry name" value="CALCIUM-TRANSPORTING ATPASE"/>
    <property type="match status" value="1"/>
</dbReference>
<dbReference type="Pfam" id="PF13246">
    <property type="entry name" value="Cation_ATPase"/>
    <property type="match status" value="1"/>
</dbReference>
<dbReference type="Pfam" id="PF00689">
    <property type="entry name" value="Cation_ATPase_C"/>
    <property type="match status" value="1"/>
</dbReference>
<dbReference type="Pfam" id="PF00690">
    <property type="entry name" value="Cation_ATPase_N"/>
    <property type="match status" value="1"/>
</dbReference>
<dbReference type="Pfam" id="PF00122">
    <property type="entry name" value="E1-E2_ATPase"/>
    <property type="match status" value="1"/>
</dbReference>
<dbReference type="Pfam" id="PF00702">
    <property type="entry name" value="Hydrolase"/>
    <property type="match status" value="1"/>
</dbReference>
<dbReference type="PRINTS" id="PR00119">
    <property type="entry name" value="CATATPASE"/>
</dbReference>
<dbReference type="SFLD" id="SFLDG00002">
    <property type="entry name" value="C1.7:_P-type_atpase_like"/>
    <property type="match status" value="1"/>
</dbReference>
<dbReference type="SFLD" id="SFLDF00027">
    <property type="entry name" value="p-type_atpase"/>
    <property type="match status" value="1"/>
</dbReference>
<dbReference type="SMART" id="SM00831">
    <property type="entry name" value="Cation_ATPase_N"/>
    <property type="match status" value="1"/>
</dbReference>
<dbReference type="SUPFAM" id="SSF81653">
    <property type="entry name" value="Calcium ATPase, transduction domain A"/>
    <property type="match status" value="1"/>
</dbReference>
<dbReference type="SUPFAM" id="SSF81665">
    <property type="entry name" value="Calcium ATPase, transmembrane domain M"/>
    <property type="match status" value="1"/>
</dbReference>
<dbReference type="SUPFAM" id="SSF56784">
    <property type="entry name" value="HAD-like"/>
    <property type="match status" value="1"/>
</dbReference>
<dbReference type="SUPFAM" id="SSF81660">
    <property type="entry name" value="Metal cation-transporting ATPase, ATP-binding domain N"/>
    <property type="match status" value="1"/>
</dbReference>
<dbReference type="PROSITE" id="PS00154">
    <property type="entry name" value="ATPASE_E1_E2"/>
    <property type="match status" value="1"/>
</dbReference>
<feature type="chain" id="PRO_0000046409" description="Calcium-transporting ATPase, endoplasmic reticulum-type">
    <location>
        <begin position="1"/>
        <end position="1048"/>
    </location>
</feature>
<feature type="topological domain" description="Cytoplasmic" evidence="3">
    <location>
        <begin position="1"/>
        <end position="63"/>
    </location>
</feature>
<feature type="transmembrane region" description="Helical; Name=1" evidence="3">
    <location>
        <begin position="64"/>
        <end position="84"/>
    </location>
</feature>
<feature type="topological domain" description="Lumenal" evidence="3">
    <location>
        <begin position="85"/>
        <end position="93"/>
    </location>
</feature>
<feature type="transmembrane region" description="Helical; Name=2" evidence="3">
    <location>
        <begin position="94"/>
        <end position="114"/>
    </location>
</feature>
<feature type="topological domain" description="Cytoplasmic" evidence="3">
    <location>
        <begin position="115"/>
        <end position="213"/>
    </location>
</feature>
<feature type="transmembrane region" description="Helical; Name=3" evidence="3">
    <location>
        <begin position="214"/>
        <end position="234"/>
    </location>
</feature>
<feature type="topological domain" description="Lumenal" evidence="3">
    <location>
        <begin position="235"/>
        <end position="267"/>
    </location>
</feature>
<feature type="transmembrane region" description="Helical; Name=4" evidence="3">
    <location>
        <begin position="268"/>
        <end position="288"/>
    </location>
</feature>
<feature type="topological domain" description="Cytoplasmic" evidence="3">
    <location>
        <begin position="289"/>
        <end position="312"/>
    </location>
</feature>
<feature type="transmembrane region" description="Helical; Name=5" evidence="3">
    <location>
        <begin position="313"/>
        <end position="333"/>
    </location>
</feature>
<feature type="topological domain" description="Lumenal" evidence="3">
    <location>
        <begin position="334"/>
        <end position="800"/>
    </location>
</feature>
<feature type="transmembrane region" description="Helical; Name=6" evidence="3">
    <location>
        <begin position="801"/>
        <end position="821"/>
    </location>
</feature>
<feature type="topological domain" description="Cytoplasmic" evidence="3">
    <location>
        <begin position="822"/>
        <end position="862"/>
    </location>
</feature>
<feature type="transmembrane region" description="Helical; Name=7" evidence="3">
    <location>
        <begin position="863"/>
        <end position="883"/>
    </location>
</feature>
<feature type="topological domain" description="Lumenal" evidence="3">
    <location>
        <begin position="884"/>
        <end position="944"/>
    </location>
</feature>
<feature type="transmembrane region" description="Helical; Name=8" evidence="3">
    <location>
        <begin position="945"/>
        <end position="965"/>
    </location>
</feature>
<feature type="topological domain" description="Cytoplasmic" evidence="3">
    <location>
        <begin position="966"/>
        <end position="981"/>
    </location>
</feature>
<feature type="transmembrane region" description="Helical; Name=9" evidence="3">
    <location>
        <begin position="982"/>
        <end position="1002"/>
    </location>
</feature>
<feature type="topological domain" description="Lumenal" evidence="3">
    <location>
        <begin position="1003"/>
        <end position="1007"/>
    </location>
</feature>
<feature type="transmembrane region" description="Helical; Name=10" evidence="3">
    <location>
        <begin position="1008"/>
        <end position="1028"/>
    </location>
</feature>
<feature type="topological domain" description="Cytoplasmic" evidence="3">
    <location>
        <begin position="1029"/>
        <end position="1048"/>
    </location>
</feature>
<feature type="active site" description="4-aspartylphosphate intermediate" evidence="2">
    <location>
        <position position="366"/>
    </location>
</feature>
<feature type="binding site" evidence="1">
    <location>
        <position position="319"/>
    </location>
    <ligand>
        <name>Ca(2+)</name>
        <dbReference type="ChEBI" id="CHEBI:29108"/>
        <label>2</label>
    </ligand>
</feature>
<feature type="binding site" evidence="1">
    <location>
        <position position="320"/>
    </location>
    <ligand>
        <name>Ca(2+)</name>
        <dbReference type="ChEBI" id="CHEBI:29108"/>
        <label>2</label>
    </ligand>
</feature>
<feature type="binding site" evidence="1">
    <location>
        <position position="322"/>
    </location>
    <ligand>
        <name>Ca(2+)</name>
        <dbReference type="ChEBI" id="CHEBI:29108"/>
        <label>2</label>
    </ligand>
</feature>
<feature type="binding site" evidence="2">
    <location>
        <position position="324"/>
    </location>
    <ligand>
        <name>Ca(2+)</name>
        <dbReference type="ChEBI" id="CHEBI:29108"/>
        <label>2</label>
    </ligand>
</feature>
<feature type="binding site" evidence="2">
    <location>
        <position position="728"/>
    </location>
    <ligand>
        <name>Mg(2+)</name>
        <dbReference type="ChEBI" id="CHEBI:18420"/>
    </ligand>
</feature>
<feature type="binding site" evidence="2">
    <location>
        <position position="732"/>
    </location>
    <ligand>
        <name>Mg(2+)</name>
        <dbReference type="ChEBI" id="CHEBI:18420"/>
    </ligand>
</feature>
<feature type="binding site" evidence="2">
    <location>
        <position position="794"/>
    </location>
    <ligand>
        <name>Ca(2+)</name>
        <dbReference type="ChEBI" id="CHEBI:29108"/>
        <label>1</label>
    </ligand>
</feature>
<feature type="binding site" evidence="2">
    <location>
        <position position="797"/>
    </location>
    <ligand>
        <name>Ca(2+)</name>
        <dbReference type="ChEBI" id="CHEBI:29108"/>
        <label>1</label>
    </ligand>
</feature>
<feature type="binding site" evidence="2">
    <location>
        <position position="822"/>
    </location>
    <ligand>
        <name>Ca(2+)</name>
        <dbReference type="ChEBI" id="CHEBI:29108"/>
        <label>2</label>
    </ligand>
</feature>
<feature type="binding site" evidence="2">
    <location>
        <position position="825"/>
    </location>
    <ligand>
        <name>Ca(2+)</name>
        <dbReference type="ChEBI" id="CHEBI:29108"/>
        <label>1</label>
    </ligand>
</feature>
<feature type="binding site" evidence="2">
    <location>
        <position position="826"/>
    </location>
    <ligand>
        <name>Ca(2+)</name>
        <dbReference type="ChEBI" id="CHEBI:29108"/>
        <label>1</label>
    </ligand>
</feature>
<feature type="binding site" evidence="2">
    <location>
        <position position="826"/>
    </location>
    <ligand>
        <name>Ca(2+)</name>
        <dbReference type="ChEBI" id="CHEBI:29108"/>
        <label>2</label>
    </ligand>
</feature>
<feature type="binding site" evidence="2">
    <location>
        <position position="957"/>
    </location>
    <ligand>
        <name>Ca(2+)</name>
        <dbReference type="ChEBI" id="CHEBI:29108"/>
        <label>1</label>
    </ligand>
</feature>
<keyword id="KW-0067">ATP-binding</keyword>
<keyword id="KW-0106">Calcium</keyword>
<keyword id="KW-0109">Calcium transport</keyword>
<keyword id="KW-0256">Endoplasmic reticulum</keyword>
<keyword id="KW-0406">Ion transport</keyword>
<keyword id="KW-0460">Magnesium</keyword>
<keyword id="KW-0472">Membrane</keyword>
<keyword id="KW-0479">Metal-binding</keyword>
<keyword id="KW-0547">Nucleotide-binding</keyword>
<keyword id="KW-0597">Phosphoprotein</keyword>
<keyword id="KW-1185">Reference proteome</keyword>
<keyword id="KW-1278">Translocase</keyword>
<keyword id="KW-0812">Transmembrane</keyword>
<keyword id="KW-1133">Transmembrane helix</keyword>
<keyword id="KW-0813">Transport</keyword>